<name>GUAA_CRYNJ</name>
<reference evidence="8" key="1">
    <citation type="journal article" date="2005" name="Science">
        <title>The genome of the basidiomycetous yeast and human pathogen Cryptococcus neoformans.</title>
        <authorList>
            <person name="Loftus B.J."/>
            <person name="Fung E."/>
            <person name="Roncaglia P."/>
            <person name="Rowley D."/>
            <person name="Amedeo P."/>
            <person name="Bruno D."/>
            <person name="Vamathevan J."/>
            <person name="Miranda M."/>
            <person name="Anderson I.J."/>
            <person name="Fraser J.A."/>
            <person name="Allen J.E."/>
            <person name="Bosdet I.E."/>
            <person name="Brent M.R."/>
            <person name="Chiu R."/>
            <person name="Doering T.L."/>
            <person name="Donlin M.J."/>
            <person name="D'Souza C.A."/>
            <person name="Fox D.S."/>
            <person name="Grinberg V."/>
            <person name="Fu J."/>
            <person name="Fukushima M."/>
            <person name="Haas B.J."/>
            <person name="Huang J.C."/>
            <person name="Janbon G."/>
            <person name="Jones S.J.M."/>
            <person name="Koo H.L."/>
            <person name="Krzywinski M.I."/>
            <person name="Kwon-Chung K.J."/>
            <person name="Lengeler K.B."/>
            <person name="Maiti R."/>
            <person name="Marra M.A."/>
            <person name="Marra R.E."/>
            <person name="Mathewson C.A."/>
            <person name="Mitchell T.G."/>
            <person name="Pertea M."/>
            <person name="Riggs F.R."/>
            <person name="Salzberg S.L."/>
            <person name="Schein J.E."/>
            <person name="Shvartsbeyn A."/>
            <person name="Shin H."/>
            <person name="Shumway M."/>
            <person name="Specht C.A."/>
            <person name="Suh B.B."/>
            <person name="Tenney A."/>
            <person name="Utterback T.R."/>
            <person name="Wickes B.L."/>
            <person name="Wortman J.R."/>
            <person name="Wye N.H."/>
            <person name="Kronstad J.W."/>
            <person name="Lodge J.K."/>
            <person name="Heitman J."/>
            <person name="Davis R.W."/>
            <person name="Fraser C.M."/>
            <person name="Hyman R.W."/>
        </authorList>
    </citation>
    <scope>NUCLEOTIDE SEQUENCE [LARGE SCALE GENOMIC DNA]</scope>
    <source>
        <strain>JEC21 / ATCC MYA-565</strain>
    </source>
</reference>
<dbReference type="EC" id="6.3.5.2" evidence="1"/>
<dbReference type="EMBL" id="AE017351">
    <property type="protein sequence ID" value="AAW46175.1"/>
    <property type="molecule type" value="Genomic_DNA"/>
</dbReference>
<dbReference type="RefSeq" id="XP_567692.1">
    <property type="nucleotide sequence ID" value="XM_567692.1"/>
</dbReference>
<dbReference type="SMR" id="Q5K9E9"/>
<dbReference type="FunCoup" id="Q5K9E9">
    <property type="interactions" value="908"/>
</dbReference>
<dbReference type="STRING" id="214684.Q5K9E9"/>
<dbReference type="MEROPS" id="C26.A07"/>
<dbReference type="PaxDb" id="214684-Q5K9E9"/>
<dbReference type="EnsemblFungi" id="AAW46175">
    <property type="protein sequence ID" value="AAW46175"/>
    <property type="gene ID" value="CNK02180"/>
</dbReference>
<dbReference type="GeneID" id="3254682"/>
<dbReference type="KEGG" id="cne:CNK02180"/>
<dbReference type="VEuPathDB" id="FungiDB:CNK02180"/>
<dbReference type="eggNOG" id="KOG1622">
    <property type="taxonomic scope" value="Eukaryota"/>
</dbReference>
<dbReference type="HOGENOM" id="CLU_014340_0_5_1"/>
<dbReference type="InParanoid" id="Q5K9E9"/>
<dbReference type="OMA" id="IWQSFAV"/>
<dbReference type="OrthoDB" id="1724632at2759"/>
<dbReference type="UniPathway" id="UPA00189">
    <property type="reaction ID" value="UER00296"/>
</dbReference>
<dbReference type="Proteomes" id="UP000002149">
    <property type="component" value="Chromosome 11"/>
</dbReference>
<dbReference type="GO" id="GO:0005829">
    <property type="term" value="C:cytosol"/>
    <property type="evidence" value="ECO:0000318"/>
    <property type="project" value="GO_Central"/>
</dbReference>
<dbReference type="GO" id="GO:0005524">
    <property type="term" value="F:ATP binding"/>
    <property type="evidence" value="ECO:0007669"/>
    <property type="project" value="UniProtKB-KW"/>
</dbReference>
<dbReference type="GO" id="GO:0003921">
    <property type="term" value="F:GMP synthase activity"/>
    <property type="evidence" value="ECO:0000318"/>
    <property type="project" value="GO_Central"/>
</dbReference>
<dbReference type="GO" id="GO:0006177">
    <property type="term" value="P:GMP biosynthetic process"/>
    <property type="evidence" value="ECO:0000318"/>
    <property type="project" value="GO_Central"/>
</dbReference>
<dbReference type="CDD" id="cd01742">
    <property type="entry name" value="GATase1_GMP_Synthase"/>
    <property type="match status" value="1"/>
</dbReference>
<dbReference type="CDD" id="cd01997">
    <property type="entry name" value="GMP_synthase_C"/>
    <property type="match status" value="1"/>
</dbReference>
<dbReference type="FunFam" id="3.30.300.10:FF:000002">
    <property type="entry name" value="GMP synthase [glutamine-hydrolyzing]"/>
    <property type="match status" value="1"/>
</dbReference>
<dbReference type="FunFam" id="3.40.50.620:FF:000001">
    <property type="entry name" value="GMP synthase [glutamine-hydrolyzing]"/>
    <property type="match status" value="1"/>
</dbReference>
<dbReference type="FunFam" id="3.40.50.880:FF:000001">
    <property type="entry name" value="GMP synthase [glutamine-hydrolyzing]"/>
    <property type="match status" value="1"/>
</dbReference>
<dbReference type="Gene3D" id="3.30.300.10">
    <property type="match status" value="1"/>
</dbReference>
<dbReference type="Gene3D" id="3.40.50.880">
    <property type="match status" value="1"/>
</dbReference>
<dbReference type="Gene3D" id="3.40.50.620">
    <property type="entry name" value="HUPs"/>
    <property type="match status" value="1"/>
</dbReference>
<dbReference type="HAMAP" id="MF_00344">
    <property type="entry name" value="GMP_synthase"/>
    <property type="match status" value="1"/>
</dbReference>
<dbReference type="InterPro" id="IPR029062">
    <property type="entry name" value="Class_I_gatase-like"/>
</dbReference>
<dbReference type="InterPro" id="IPR017926">
    <property type="entry name" value="GATASE"/>
</dbReference>
<dbReference type="InterPro" id="IPR001674">
    <property type="entry name" value="GMP_synth_C"/>
</dbReference>
<dbReference type="InterPro" id="IPR004739">
    <property type="entry name" value="GMP_synth_GATase"/>
</dbReference>
<dbReference type="InterPro" id="IPR022955">
    <property type="entry name" value="GMP_synthase"/>
</dbReference>
<dbReference type="InterPro" id="IPR025777">
    <property type="entry name" value="GMPS_ATP_PPase_dom"/>
</dbReference>
<dbReference type="InterPro" id="IPR022310">
    <property type="entry name" value="NAD/GMP_synthase"/>
</dbReference>
<dbReference type="InterPro" id="IPR014729">
    <property type="entry name" value="Rossmann-like_a/b/a_fold"/>
</dbReference>
<dbReference type="NCBIfam" id="TIGR00884">
    <property type="entry name" value="guaA_Cterm"/>
    <property type="match status" value="1"/>
</dbReference>
<dbReference type="NCBIfam" id="TIGR00888">
    <property type="entry name" value="guaA_Nterm"/>
    <property type="match status" value="1"/>
</dbReference>
<dbReference type="NCBIfam" id="NF000848">
    <property type="entry name" value="PRK00074.1"/>
    <property type="match status" value="1"/>
</dbReference>
<dbReference type="PANTHER" id="PTHR11922:SF2">
    <property type="entry name" value="GMP SYNTHASE [GLUTAMINE-HYDROLYZING]"/>
    <property type="match status" value="1"/>
</dbReference>
<dbReference type="PANTHER" id="PTHR11922">
    <property type="entry name" value="GMP SYNTHASE-RELATED"/>
    <property type="match status" value="1"/>
</dbReference>
<dbReference type="Pfam" id="PF00117">
    <property type="entry name" value="GATase"/>
    <property type="match status" value="1"/>
</dbReference>
<dbReference type="Pfam" id="PF00958">
    <property type="entry name" value="GMP_synt_C"/>
    <property type="match status" value="1"/>
</dbReference>
<dbReference type="Pfam" id="PF02540">
    <property type="entry name" value="NAD_synthase"/>
    <property type="match status" value="1"/>
</dbReference>
<dbReference type="PRINTS" id="PR00096">
    <property type="entry name" value="GATASE"/>
</dbReference>
<dbReference type="SUPFAM" id="SSF52402">
    <property type="entry name" value="Adenine nucleotide alpha hydrolases-like"/>
    <property type="match status" value="1"/>
</dbReference>
<dbReference type="SUPFAM" id="SSF52317">
    <property type="entry name" value="Class I glutamine amidotransferase-like"/>
    <property type="match status" value="1"/>
</dbReference>
<dbReference type="SUPFAM" id="SSF54810">
    <property type="entry name" value="GMP synthetase C-terminal dimerisation domain"/>
    <property type="match status" value="1"/>
</dbReference>
<dbReference type="PROSITE" id="PS51273">
    <property type="entry name" value="GATASE_TYPE_1"/>
    <property type="match status" value="1"/>
</dbReference>
<dbReference type="PROSITE" id="PS51553">
    <property type="entry name" value="GMPS_ATP_PPASE"/>
    <property type="match status" value="1"/>
</dbReference>
<protein>
    <recommendedName>
        <fullName evidence="6">GMP synthase [glutamine-hydrolyzing]</fullName>
        <ecNumber evidence="1">6.3.5.2</ecNumber>
    </recommendedName>
    <alternativeName>
        <fullName evidence="6">GMP synthetase</fullName>
    </alternativeName>
    <alternativeName>
        <fullName evidence="6">Glutamine amidotransferase</fullName>
    </alternativeName>
</protein>
<feature type="chain" id="PRO_0000460616" description="GMP synthase [glutamine-hydrolyzing]">
    <location>
        <begin position="1"/>
        <end position="544"/>
    </location>
</feature>
<feature type="domain" description="Glutamine amidotransferase type-1" evidence="4">
    <location>
        <begin position="12"/>
        <end position="210"/>
    </location>
</feature>
<feature type="domain" description="GMPS ATP-PPase" evidence="5">
    <location>
        <begin position="211"/>
        <end position="419"/>
    </location>
</feature>
<feature type="active site" description="Nucleophile" evidence="4">
    <location>
        <position position="88"/>
    </location>
</feature>
<feature type="active site" evidence="4">
    <location>
        <position position="184"/>
    </location>
</feature>
<feature type="active site" evidence="4">
    <location>
        <position position="186"/>
    </location>
</feature>
<feature type="binding site" evidence="5">
    <location>
        <begin position="239"/>
        <end position="245"/>
    </location>
    <ligand>
        <name>ATP</name>
        <dbReference type="ChEBI" id="CHEBI:30616"/>
    </ligand>
</feature>
<feature type="binding site" evidence="2">
    <location>
        <position position="312"/>
    </location>
    <ligand>
        <name>XMP</name>
        <dbReference type="ChEBI" id="CHEBI:57464"/>
    </ligand>
</feature>
<feature type="binding site" evidence="2">
    <location>
        <position position="481"/>
    </location>
    <ligand>
        <name>XMP</name>
        <dbReference type="ChEBI" id="CHEBI:57464"/>
    </ligand>
</feature>
<feature type="binding site" evidence="2">
    <location>
        <position position="536"/>
    </location>
    <ligand>
        <name>XMP</name>
        <dbReference type="ChEBI" id="CHEBI:57464"/>
    </ligand>
</feature>
<feature type="binding site" evidence="2">
    <location>
        <position position="542"/>
    </location>
    <ligand>
        <name>XMP</name>
        <dbReference type="ChEBI" id="CHEBI:57464"/>
    </ligand>
</feature>
<gene>
    <name evidence="6" type="primary">GUA1</name>
    <name evidence="7" type="ordered locus">CNK02180</name>
</gene>
<accession>Q5K9E9</accession>
<evidence type="ECO:0000250" key="1">
    <source>
        <dbReference type="UniProtKB" id="J9VUY6"/>
    </source>
</evidence>
<evidence type="ECO:0000250" key="2">
    <source>
        <dbReference type="UniProtKB" id="P49915"/>
    </source>
</evidence>
<evidence type="ECO:0000250" key="3">
    <source>
        <dbReference type="UniProtKB" id="Q9P772"/>
    </source>
</evidence>
<evidence type="ECO:0000255" key="4">
    <source>
        <dbReference type="PROSITE-ProRule" id="PRU00605"/>
    </source>
</evidence>
<evidence type="ECO:0000255" key="5">
    <source>
        <dbReference type="PROSITE-ProRule" id="PRU00886"/>
    </source>
</evidence>
<evidence type="ECO:0000305" key="6"/>
<evidence type="ECO:0000312" key="7">
    <source>
        <dbReference type="EMBL" id="AAW46175.1"/>
    </source>
</evidence>
<evidence type="ECO:0000312" key="8">
    <source>
        <dbReference type="Proteomes" id="UP000002149"/>
    </source>
</evidence>
<comment type="function">
    <text evidence="1">Catalyzes the conversion of xanthine monophosphate (XMP) to GMP in the presence of glutamine and ATP through an adenyl-XMP intermediate.</text>
</comment>
<comment type="catalytic activity">
    <reaction evidence="1">
        <text>XMP + L-glutamine + ATP + H2O = GMP + L-glutamate + AMP + diphosphate + 2 H(+)</text>
        <dbReference type="Rhea" id="RHEA:11680"/>
        <dbReference type="ChEBI" id="CHEBI:15377"/>
        <dbReference type="ChEBI" id="CHEBI:15378"/>
        <dbReference type="ChEBI" id="CHEBI:29985"/>
        <dbReference type="ChEBI" id="CHEBI:30616"/>
        <dbReference type="ChEBI" id="CHEBI:33019"/>
        <dbReference type="ChEBI" id="CHEBI:57464"/>
        <dbReference type="ChEBI" id="CHEBI:58115"/>
        <dbReference type="ChEBI" id="CHEBI:58359"/>
        <dbReference type="ChEBI" id="CHEBI:456215"/>
        <dbReference type="EC" id="6.3.5.2"/>
    </reaction>
</comment>
<comment type="cofactor">
    <cofactor evidence="1">
        <name>Mg(2+)</name>
        <dbReference type="ChEBI" id="CHEBI:18420"/>
    </cofactor>
</comment>
<comment type="pathway">
    <text evidence="1">Purine metabolism; GMP biosynthesis; GMP from XMP (L-Gln route): step 1/1.</text>
</comment>
<comment type="subunit">
    <text evidence="1">Homodimer. Also forms a small population of homotetramers.</text>
</comment>
<comment type="subcellular location">
    <subcellularLocation>
        <location evidence="3">Cytoplasm</location>
        <location evidence="3">Cytosol</location>
    </subcellularLocation>
</comment>
<sequence length="544" mass="59915">MATEEIHSLYDTILILDFGSQYSHLITRRCRELNVYCEMLPCTQKISDLSWKPKGVILSGSPYSVYAPDAPHVDPEVFTLGVPILGICYGLQEIARVHGGTVDAHTHREYGYAKIEVVKTGKKEQDALFEGIEMEADGGLQVWMSHGDQLTSLPPNFVTIASTPTSPYTAVAHESKPIYGVQFHPEVSHSPKGKEVIAAFVKNVCSVRDGWSMESFIPKEIARIRQICGEKGQVIGAVSGGVDSTVAAKLMHEAIGDRFHAIMVDNGVLRKDEAKKVHKMLTVDLGVNLTVVDASELFLARLKGVEDPERKRKIIGNTFIEVFEAEAAKLEAAAEKELAEKGGEAKGKIEWLLQGTLYPDVIESISFKGPSATIKTHHNVGGLLEDMKLKLIEPLRELFKDEVRALGRLLNIPEHLVGRHPFPGPGLAIRILGEVTREQIAILQHADDIYIEEVRAAGLYDQISQAFVALLPVKAVGVAGDARTYDQVVAVRAVSTEDFMTADWFVFPPQVLKRISSRITNEVKGVNRVVYDITSKPPGTVEWL</sequence>
<organism evidence="8">
    <name type="scientific">Cryptococcus neoformans var. neoformans serotype D (strain JEC21 / ATCC MYA-565)</name>
    <name type="common">Filobasidiella neoformans</name>
    <dbReference type="NCBI Taxonomy" id="214684"/>
    <lineage>
        <taxon>Eukaryota</taxon>
        <taxon>Fungi</taxon>
        <taxon>Dikarya</taxon>
        <taxon>Basidiomycota</taxon>
        <taxon>Agaricomycotina</taxon>
        <taxon>Tremellomycetes</taxon>
        <taxon>Tremellales</taxon>
        <taxon>Cryptococcaceae</taxon>
        <taxon>Cryptococcus</taxon>
        <taxon>Cryptococcus neoformans species complex</taxon>
    </lineage>
</organism>
<proteinExistence type="inferred from homology"/>
<keyword id="KW-0067">ATP-binding</keyword>
<keyword id="KW-0963">Cytoplasm</keyword>
<keyword id="KW-0315">Glutamine amidotransferase</keyword>
<keyword id="KW-0332">GMP biosynthesis</keyword>
<keyword id="KW-0436">Ligase</keyword>
<keyword id="KW-0460">Magnesium</keyword>
<keyword id="KW-0547">Nucleotide-binding</keyword>
<keyword id="KW-0658">Purine biosynthesis</keyword>
<keyword id="KW-1185">Reference proteome</keyword>